<comment type="function">
    <text evidence="1">Functions in the biosynthesis of the anionic phospholipids phosphatidylglycerol and cardiolipin.</text>
</comment>
<comment type="catalytic activity">
    <reaction>
        <text>a CDP-1,2-diacyl-sn-glycerol + sn-glycerol 3-phosphate = a 1,2-diacyl-sn-glycero-3-phospho-(1'-sn-glycero-3'-phosphate) + CMP + H(+)</text>
        <dbReference type="Rhea" id="RHEA:12593"/>
        <dbReference type="ChEBI" id="CHEBI:15378"/>
        <dbReference type="ChEBI" id="CHEBI:57597"/>
        <dbReference type="ChEBI" id="CHEBI:58332"/>
        <dbReference type="ChEBI" id="CHEBI:60110"/>
        <dbReference type="ChEBI" id="CHEBI:60377"/>
        <dbReference type="EC" id="2.7.8.5"/>
    </reaction>
</comment>
<comment type="activity regulation">
    <text evidence="1">Activated by calcium and magnesium and inhibited by other bivalent cations.</text>
</comment>
<comment type="pathway">
    <text>Phospholipid metabolism; phosphatidylglycerol biosynthesis; phosphatidylglycerol from CDP-diacylglycerol: step 1/2.</text>
</comment>
<comment type="subcellular location">
    <subcellularLocation>
        <location evidence="1">Mitochondrion</location>
    </subcellularLocation>
</comment>
<comment type="alternative products">
    <event type="alternative splicing"/>
    <isoform>
        <id>Q32NB8-1</id>
        <name>1</name>
        <sequence type="displayed"/>
    </isoform>
    <isoform>
        <id>Q32NB8-2</id>
        <name>2</name>
        <sequence type="described" ref="VSP_033899 VSP_033902 VSP_033903"/>
    </isoform>
    <isoform>
        <id>Q32NB8-3</id>
        <name>3</name>
        <sequence type="described" ref="VSP_033900 VSP_033901"/>
    </isoform>
    <isoform>
        <id>Q32NB8-4</id>
        <name>4</name>
        <sequence type="described" ref="VSP_033897 VSP_033898"/>
    </isoform>
</comment>
<comment type="similarity">
    <text evidence="7">Belongs to the CDP-alcohol phosphatidyltransferase class-II family.</text>
</comment>
<comment type="sequence caution" evidence="7">
    <conflict type="erroneous initiation">
        <sequence resource="EMBL-CDS" id="AAH08903"/>
    </conflict>
</comment>
<comment type="sequence caution" evidence="7">
    <conflict type="erroneous initiation">
        <sequence resource="EMBL-CDS" id="AAH15570"/>
    </conflict>
</comment>
<comment type="sequence caution" evidence="7">
    <conflict type="erroneous initiation">
        <sequence resource="EMBL-CDS" id="AAH35662"/>
    </conflict>
    <text>Extended N-terminus.</text>
</comment>
<comment type="sequence caution" evidence="7">
    <conflict type="frameshift">
        <sequence resource="EMBL-CDS" id="AAH35662"/>
    </conflict>
</comment>
<comment type="sequence caution" evidence="7">
    <conflict type="erroneous translation">
        <sequence resource="EMBL-CDS" id="BAB14921"/>
    </conflict>
    <text>Wrong choice of CDS.</text>
</comment>
<sequence>MAVAAAAAAGPVFWRRLLGLLPGRPGLAALLGRLSDRLGRNRDRQRRRSPWLLLAPLLSPAVPQVTSPPCCLCPEGVHRFQWIRNLVPEFGVSSSHVRVLSSPAEFFELMKGQIRVAKRRVVMASLYLGTGPLEQELVDCLESTLEKSLQAKFPSNLKVSILLDFTRGSRGRKNSRTMLLPLLRRFPEQVRVSLFHTPHLRGLLRLLIPERFNETIGLQHIKVYLFDNSVILSGANLSDSYFTNRQDRYVFLQDCAEIADFFTELVDAVGDVSLQLQGDDTVQVVDGMVHPYKGDRAEYCKAANKRVMDVINSARTRQQMLHAQTFHSNSLLTQEDAAAAGDRRPAPDTWIYPLIQMKPFEIQIDEIVTETLLTEAERGAKVYLTTGYFNLTQAYMDLVLGTRAEYQILLASPEVNGFFGAKGVAGAIPAAYVHIERQFFSEVCSLGQQERVQLQEYWRRGWTFHAKGLWLYLAGSSLPCLTLIGSPNFGYRSVHRDLEAQIAIVTENQALQQQLHQEQEQLYLRSGVVSSATFEQPSRQVKLWVKMVTPLIKNFF</sequence>
<dbReference type="EC" id="2.7.8.5"/>
<dbReference type="EMBL" id="AK024529">
    <property type="protein sequence ID" value="BAB14921.1"/>
    <property type="status" value="ALT_SEQ"/>
    <property type="molecule type" value="mRNA"/>
</dbReference>
<dbReference type="EMBL" id="AK316147">
    <property type="protein sequence ID" value="BAH14518.1"/>
    <property type="molecule type" value="mRNA"/>
</dbReference>
<dbReference type="EMBL" id="CH471099">
    <property type="protein sequence ID" value="EAW89524.1"/>
    <property type="molecule type" value="Genomic_DNA"/>
</dbReference>
<dbReference type="EMBL" id="BC008903">
    <property type="protein sequence ID" value="AAH08903.2"/>
    <property type="status" value="ALT_INIT"/>
    <property type="molecule type" value="mRNA"/>
</dbReference>
<dbReference type="EMBL" id="BC015570">
    <property type="protein sequence ID" value="AAH15570.2"/>
    <property type="status" value="ALT_INIT"/>
    <property type="molecule type" value="mRNA"/>
</dbReference>
<dbReference type="EMBL" id="BC025951">
    <property type="protein sequence ID" value="AAH25951.2"/>
    <property type="molecule type" value="mRNA"/>
</dbReference>
<dbReference type="EMBL" id="BC035662">
    <property type="protein sequence ID" value="AAH35662.1"/>
    <property type="status" value="ALT_SEQ"/>
    <property type="molecule type" value="mRNA"/>
</dbReference>
<dbReference type="EMBL" id="BC108732">
    <property type="protein sequence ID" value="AAI08733.1"/>
    <property type="molecule type" value="mRNA"/>
</dbReference>
<dbReference type="EMBL" id="AL359590">
    <property type="protein sequence ID" value="CAB94876.1"/>
    <property type="molecule type" value="mRNA"/>
</dbReference>
<dbReference type="EMBL" id="CR749720">
    <property type="protein sequence ID" value="CAH18487.1"/>
    <property type="molecule type" value="mRNA"/>
</dbReference>
<dbReference type="CCDS" id="CCDS42391.1">
    <molecule id="Q32NB8-1"/>
</dbReference>
<dbReference type="PIR" id="T50620">
    <property type="entry name" value="T50620"/>
</dbReference>
<dbReference type="RefSeq" id="NP_077733.3">
    <molecule id="Q32NB8-1"/>
    <property type="nucleotide sequence ID" value="NM_024419.4"/>
</dbReference>
<dbReference type="RefSeq" id="XP_016880850.1">
    <molecule id="Q32NB8-1"/>
    <property type="nucleotide sequence ID" value="XM_017025361.3"/>
</dbReference>
<dbReference type="RefSeq" id="XP_016880851.1">
    <property type="nucleotide sequence ID" value="XM_017025362.1"/>
</dbReference>
<dbReference type="RefSeq" id="XP_054173839.1">
    <molecule id="Q32NB8-1"/>
    <property type="nucleotide sequence ID" value="XM_054317864.1"/>
</dbReference>
<dbReference type="SMR" id="Q32NB8"/>
<dbReference type="BioGRID" id="114871">
    <property type="interactions" value="17"/>
</dbReference>
<dbReference type="FunCoup" id="Q32NB8">
    <property type="interactions" value="2505"/>
</dbReference>
<dbReference type="IntAct" id="Q32NB8">
    <property type="interactions" value="5"/>
</dbReference>
<dbReference type="STRING" id="9606.ENSP00000262764"/>
<dbReference type="CarbonylDB" id="Q32NB8"/>
<dbReference type="iPTMnet" id="Q32NB8"/>
<dbReference type="PhosphoSitePlus" id="Q32NB8"/>
<dbReference type="BioMuta" id="PGS1"/>
<dbReference type="DMDM" id="121942206"/>
<dbReference type="jPOST" id="Q32NB8"/>
<dbReference type="MassIVE" id="Q32NB8"/>
<dbReference type="PaxDb" id="9606-ENSP00000262764"/>
<dbReference type="PeptideAtlas" id="Q32NB8"/>
<dbReference type="ProteomicsDB" id="61615">
    <molecule id="Q32NB8-1"/>
</dbReference>
<dbReference type="ProteomicsDB" id="61616">
    <molecule id="Q32NB8-2"/>
</dbReference>
<dbReference type="ProteomicsDB" id="61617">
    <molecule id="Q32NB8-3"/>
</dbReference>
<dbReference type="ProteomicsDB" id="61618">
    <molecule id="Q32NB8-4"/>
</dbReference>
<dbReference type="Pumba" id="Q32NB8"/>
<dbReference type="TopDownProteomics" id="Q32NB8-1">
    <molecule id="Q32NB8-1"/>
</dbReference>
<dbReference type="TopDownProteomics" id="Q32NB8-2">
    <molecule id="Q32NB8-2"/>
</dbReference>
<dbReference type="TopDownProteomics" id="Q32NB8-3">
    <molecule id="Q32NB8-3"/>
</dbReference>
<dbReference type="Antibodypedia" id="9930">
    <property type="antibodies" value="158 antibodies from 22 providers"/>
</dbReference>
<dbReference type="DNASU" id="9489"/>
<dbReference type="Ensembl" id="ENST00000262764.11">
    <molecule id="Q32NB8-1"/>
    <property type="protein sequence ID" value="ENSP00000262764.5"/>
    <property type="gene ID" value="ENSG00000087157.19"/>
</dbReference>
<dbReference type="Ensembl" id="ENST00000589425.5">
    <molecule id="Q32NB8-4"/>
    <property type="protein sequence ID" value="ENSP00000465278.1"/>
    <property type="gene ID" value="ENSG00000087157.19"/>
</dbReference>
<dbReference type="Ensembl" id="ENST00000589426.5">
    <molecule id="Q32NB8-2"/>
    <property type="protein sequence ID" value="ENSP00000468431.1"/>
    <property type="gene ID" value="ENSG00000087157.19"/>
</dbReference>
<dbReference type="GeneID" id="9489"/>
<dbReference type="KEGG" id="hsa:9489"/>
<dbReference type="MANE-Select" id="ENST00000262764.11">
    <property type="protein sequence ID" value="ENSP00000262764.5"/>
    <property type="RefSeq nucleotide sequence ID" value="NM_024419.5"/>
    <property type="RefSeq protein sequence ID" value="NP_077733.3"/>
</dbReference>
<dbReference type="UCSC" id="uc002jvm.4">
    <molecule id="Q32NB8-1"/>
    <property type="organism name" value="human"/>
</dbReference>
<dbReference type="AGR" id="HGNC:30029"/>
<dbReference type="CTD" id="9489"/>
<dbReference type="DisGeNET" id="9489"/>
<dbReference type="GeneCards" id="PGS1"/>
<dbReference type="HGNC" id="HGNC:30029">
    <property type="gene designation" value="PGS1"/>
</dbReference>
<dbReference type="HPA" id="ENSG00000087157">
    <property type="expression patterns" value="Low tissue specificity"/>
</dbReference>
<dbReference type="MIM" id="614942">
    <property type="type" value="gene"/>
</dbReference>
<dbReference type="neXtProt" id="NX_Q32NB8"/>
<dbReference type="OpenTargets" id="ENSG00000087157"/>
<dbReference type="PharmGKB" id="PA142671180"/>
<dbReference type="VEuPathDB" id="HostDB:ENSG00000087157"/>
<dbReference type="eggNOG" id="KOG3964">
    <property type="taxonomic scope" value="Eukaryota"/>
</dbReference>
<dbReference type="GeneTree" id="ENSGT00390000002373"/>
<dbReference type="HOGENOM" id="CLU_030471_1_2_1"/>
<dbReference type="InParanoid" id="Q32NB8"/>
<dbReference type="OMA" id="HKCLAQC"/>
<dbReference type="OrthoDB" id="10250191at2759"/>
<dbReference type="PAN-GO" id="Q32NB8">
    <property type="GO annotations" value="3 GO annotations based on evolutionary models"/>
</dbReference>
<dbReference type="PhylomeDB" id="Q32NB8"/>
<dbReference type="TreeFam" id="TF314768"/>
<dbReference type="BioCyc" id="MetaCyc:HS01560-MONOMER"/>
<dbReference type="BRENDA" id="2.7.8.5">
    <property type="organism ID" value="2681"/>
</dbReference>
<dbReference type="PathwayCommons" id="Q32NB8"/>
<dbReference type="Reactome" id="R-HSA-1483148">
    <property type="pathway name" value="Synthesis of PG"/>
</dbReference>
<dbReference type="SignaLink" id="Q32NB8"/>
<dbReference type="SIGNOR" id="Q32NB8"/>
<dbReference type="UniPathway" id="UPA00084">
    <property type="reaction ID" value="UER00503"/>
</dbReference>
<dbReference type="BioGRID-ORCS" id="9489">
    <property type="hits" value="533 hits in 1174 CRISPR screens"/>
</dbReference>
<dbReference type="ChiTaRS" id="PGS1">
    <property type="organism name" value="human"/>
</dbReference>
<dbReference type="GenomeRNAi" id="9489"/>
<dbReference type="Pharos" id="Q32NB8">
    <property type="development level" value="Tbio"/>
</dbReference>
<dbReference type="PRO" id="PR:Q32NB8"/>
<dbReference type="Proteomes" id="UP000005640">
    <property type="component" value="Chromosome 17"/>
</dbReference>
<dbReference type="RNAct" id="Q32NB8">
    <property type="molecule type" value="protein"/>
</dbReference>
<dbReference type="Bgee" id="ENSG00000087157">
    <property type="expression patterns" value="Expressed in blood and 169 other cell types or tissues"/>
</dbReference>
<dbReference type="ExpressionAtlas" id="Q32NB8">
    <property type="expression patterns" value="baseline and differential"/>
</dbReference>
<dbReference type="GO" id="GO:0005783">
    <property type="term" value="C:endoplasmic reticulum"/>
    <property type="evidence" value="ECO:0000314"/>
    <property type="project" value="LIFEdb"/>
</dbReference>
<dbReference type="GO" id="GO:0005743">
    <property type="term" value="C:mitochondrial inner membrane"/>
    <property type="evidence" value="ECO:0000304"/>
    <property type="project" value="BHF-UCL"/>
</dbReference>
<dbReference type="GO" id="GO:0005739">
    <property type="term" value="C:mitochondrion"/>
    <property type="evidence" value="ECO:0000314"/>
    <property type="project" value="FlyBase"/>
</dbReference>
<dbReference type="GO" id="GO:0005524">
    <property type="term" value="F:ATP binding"/>
    <property type="evidence" value="ECO:0007669"/>
    <property type="project" value="UniProtKB-KW"/>
</dbReference>
<dbReference type="GO" id="GO:0005509">
    <property type="term" value="F:calcium ion binding"/>
    <property type="evidence" value="ECO:0000250"/>
    <property type="project" value="BHF-UCL"/>
</dbReference>
<dbReference type="GO" id="GO:0008444">
    <property type="term" value="F:CDP-diacylglycerol-glycerol-3-phosphate 3-phosphatidyltransferase activity"/>
    <property type="evidence" value="ECO:0000250"/>
    <property type="project" value="BHF-UCL"/>
</dbReference>
<dbReference type="GO" id="GO:0032049">
    <property type="term" value="P:cardiolipin biosynthetic process"/>
    <property type="evidence" value="ECO:0000250"/>
    <property type="project" value="BHF-UCL"/>
</dbReference>
<dbReference type="GO" id="GO:0046339">
    <property type="term" value="P:diacylglycerol metabolic process"/>
    <property type="evidence" value="ECO:0000250"/>
    <property type="project" value="BHF-UCL"/>
</dbReference>
<dbReference type="GO" id="GO:0006655">
    <property type="term" value="P:phosphatidylglycerol biosynthetic process"/>
    <property type="evidence" value="ECO:0000250"/>
    <property type="project" value="BHF-UCL"/>
</dbReference>
<dbReference type="CDD" id="cd09135">
    <property type="entry name" value="PLDc_PGS1_euk_1"/>
    <property type="match status" value="1"/>
</dbReference>
<dbReference type="CDD" id="cd09137">
    <property type="entry name" value="PLDc_PGS1_euk_2"/>
    <property type="match status" value="1"/>
</dbReference>
<dbReference type="FunFam" id="3.30.870.10:FF:000023">
    <property type="entry name" value="CDP-diacylglycerol--glycerol-3-phosphate 3-phosphatidyltransferase"/>
    <property type="match status" value="1"/>
</dbReference>
<dbReference type="FunFam" id="3.30.870.10:FF:000026">
    <property type="entry name" value="CDP-diacylglycerol--glycerol-3-phosphate 3-phosphatidyltransferase"/>
    <property type="match status" value="1"/>
</dbReference>
<dbReference type="Gene3D" id="3.30.870.10">
    <property type="entry name" value="Endonuclease Chain A"/>
    <property type="match status" value="2"/>
</dbReference>
<dbReference type="InterPro" id="IPR016270">
    <property type="entry name" value="PGS1"/>
</dbReference>
<dbReference type="InterPro" id="IPR001736">
    <property type="entry name" value="PLipase_D/transphosphatidylase"/>
</dbReference>
<dbReference type="PANTHER" id="PTHR12586:SF1">
    <property type="entry name" value="CDP-DIACYLGLYCEROL--GLYCEROL-3-PHOSPHATE 3-PHOSPHATIDYLTRANSFERASE, MITOCHONDRIAL"/>
    <property type="match status" value="1"/>
</dbReference>
<dbReference type="PANTHER" id="PTHR12586">
    <property type="entry name" value="CDP-DIACYLGLYCEROL--SERINE O-PHOSPHATIDYLTRANSFERASE"/>
    <property type="match status" value="1"/>
</dbReference>
<dbReference type="PIRSF" id="PIRSF000850">
    <property type="entry name" value="Phospholipase_D_PSS"/>
    <property type="match status" value="1"/>
</dbReference>
<dbReference type="SUPFAM" id="SSF56024">
    <property type="entry name" value="Phospholipase D/nuclease"/>
    <property type="match status" value="2"/>
</dbReference>
<dbReference type="PROSITE" id="PS50035">
    <property type="entry name" value="PLD"/>
    <property type="match status" value="1"/>
</dbReference>
<protein>
    <recommendedName>
        <fullName>CDP-diacylglycerol--glycerol-3-phosphate 3-phosphatidyltransferase, mitochondrial</fullName>
        <ecNumber>2.7.8.5</ecNumber>
    </recommendedName>
    <alternativeName>
        <fullName>Phosphatidylglycerophosphate synthase 1</fullName>
        <shortName>PGP synthase 1</shortName>
    </alternativeName>
</protein>
<keyword id="KW-0025">Alternative splicing</keyword>
<keyword id="KW-0067">ATP-binding</keyword>
<keyword id="KW-0444">Lipid biosynthesis</keyword>
<keyword id="KW-0443">Lipid metabolism</keyword>
<keyword id="KW-0496">Mitochondrion</keyword>
<keyword id="KW-0547">Nucleotide-binding</keyword>
<keyword id="KW-0594">Phospholipid biosynthesis</keyword>
<keyword id="KW-1208">Phospholipid metabolism</keyword>
<keyword id="KW-0597">Phosphoprotein</keyword>
<keyword id="KW-1267">Proteomics identification</keyword>
<keyword id="KW-1185">Reference proteome</keyword>
<keyword id="KW-0677">Repeat</keyword>
<keyword id="KW-0808">Transferase</keyword>
<keyword id="KW-0809">Transit peptide</keyword>
<organism>
    <name type="scientific">Homo sapiens</name>
    <name type="common">Human</name>
    <dbReference type="NCBI Taxonomy" id="9606"/>
    <lineage>
        <taxon>Eukaryota</taxon>
        <taxon>Metazoa</taxon>
        <taxon>Chordata</taxon>
        <taxon>Craniata</taxon>
        <taxon>Vertebrata</taxon>
        <taxon>Euteleostomi</taxon>
        <taxon>Mammalia</taxon>
        <taxon>Eutheria</taxon>
        <taxon>Euarchontoglires</taxon>
        <taxon>Primates</taxon>
        <taxon>Haplorrhini</taxon>
        <taxon>Catarrhini</taxon>
        <taxon>Hominidae</taxon>
        <taxon>Homo</taxon>
    </lineage>
</organism>
<feature type="transit peptide" description="Mitochondrion" evidence="3">
    <location>
        <begin position="1"/>
        <end position="28"/>
    </location>
</feature>
<feature type="chain" id="PRO_0000337105" description="CDP-diacylglycerol--glycerol-3-phosphate 3-phosphatidyltransferase, mitochondrial">
    <location>
        <begin position="29"/>
        <end position="556"/>
    </location>
</feature>
<feature type="domain" description="PLD phosphodiesterase 1" evidence="4">
    <location>
        <begin position="215"/>
        <end position="241"/>
    </location>
</feature>
<feature type="domain" description="PLD phosphodiesterase 2" evidence="4">
    <location>
        <begin position="460"/>
        <end position="493"/>
    </location>
</feature>
<feature type="active site" evidence="4">
    <location>
        <position position="220"/>
    </location>
</feature>
<feature type="active site" evidence="4">
    <location>
        <position position="222"/>
    </location>
</feature>
<feature type="active site" evidence="4">
    <location>
        <position position="227"/>
    </location>
</feature>
<feature type="binding site" evidence="3">
    <location>
        <begin position="124"/>
        <end position="131"/>
    </location>
    <ligand>
        <name>ATP</name>
        <dbReference type="ChEBI" id="CHEBI:30616"/>
    </ligand>
</feature>
<feature type="modified residue" description="Phosphoserine" evidence="2">
    <location>
        <position position="49"/>
    </location>
</feature>
<feature type="splice variant" id="VSP_033897" description="In isoform 4." evidence="5">
    <original>RSP</original>
    <variation>RGR</variation>
    <location>
        <begin position="48"/>
        <end position="50"/>
    </location>
</feature>
<feature type="splice variant" id="VSP_033898" description="In isoform 4." evidence="5">
    <location>
        <begin position="51"/>
        <end position="556"/>
    </location>
</feature>
<feature type="splice variant" id="VSP_033899" description="In isoform 2." evidence="6">
    <location>
        <begin position="112"/>
        <end position="137"/>
    </location>
</feature>
<feature type="splice variant" id="VSP_033900" description="In isoform 3." evidence="6">
    <original>SNS</original>
    <variation>RTL</variation>
    <location>
        <begin position="328"/>
        <end position="330"/>
    </location>
</feature>
<feature type="splice variant" id="VSP_033901" description="In isoform 3." evidence="6">
    <location>
        <begin position="331"/>
        <end position="556"/>
    </location>
</feature>
<feature type="splice variant" id="VSP_033902" description="In isoform 2." evidence="6">
    <original>LWLYLAGSSLPC</original>
    <variation>QFTGTWRPRLRS</variation>
    <location>
        <begin position="469"/>
        <end position="480"/>
    </location>
</feature>
<feature type="splice variant" id="VSP_033903" description="In isoform 2." evidence="6">
    <location>
        <begin position="481"/>
        <end position="556"/>
    </location>
</feature>
<gene>
    <name type="primary">PGS1</name>
</gene>
<name>PGPS1_HUMAN</name>
<proteinExistence type="evidence at protein level"/>
<accession>Q32NB8</accession>
<accession>B7ZA32</accession>
<accession>Q8IYK9</accession>
<accession>Q8TA85</accession>
<accession>Q96A75</accession>
<accession>Q9H7G9</accession>
<accession>Q9NPW7</accession>
<reference key="1">
    <citation type="journal article" date="2004" name="Nat. Genet.">
        <title>Complete sequencing and characterization of 21,243 full-length human cDNAs.</title>
        <authorList>
            <person name="Ota T."/>
            <person name="Suzuki Y."/>
            <person name="Nishikawa T."/>
            <person name="Otsuki T."/>
            <person name="Sugiyama T."/>
            <person name="Irie R."/>
            <person name="Wakamatsu A."/>
            <person name="Hayashi K."/>
            <person name="Sato H."/>
            <person name="Nagai K."/>
            <person name="Kimura K."/>
            <person name="Makita H."/>
            <person name="Sekine M."/>
            <person name="Obayashi M."/>
            <person name="Nishi T."/>
            <person name="Shibahara T."/>
            <person name="Tanaka T."/>
            <person name="Ishii S."/>
            <person name="Yamamoto J."/>
            <person name="Saito K."/>
            <person name="Kawai Y."/>
            <person name="Isono Y."/>
            <person name="Nakamura Y."/>
            <person name="Nagahari K."/>
            <person name="Murakami K."/>
            <person name="Yasuda T."/>
            <person name="Iwayanagi T."/>
            <person name="Wagatsuma M."/>
            <person name="Shiratori A."/>
            <person name="Sudo H."/>
            <person name="Hosoiri T."/>
            <person name="Kaku Y."/>
            <person name="Kodaira H."/>
            <person name="Kondo H."/>
            <person name="Sugawara M."/>
            <person name="Takahashi M."/>
            <person name="Kanda K."/>
            <person name="Yokoi T."/>
            <person name="Furuya T."/>
            <person name="Kikkawa E."/>
            <person name="Omura Y."/>
            <person name="Abe K."/>
            <person name="Kamihara K."/>
            <person name="Katsuta N."/>
            <person name="Sato K."/>
            <person name="Tanikawa M."/>
            <person name="Yamazaki M."/>
            <person name="Ninomiya K."/>
            <person name="Ishibashi T."/>
            <person name="Yamashita H."/>
            <person name="Murakawa K."/>
            <person name="Fujimori K."/>
            <person name="Tanai H."/>
            <person name="Kimata M."/>
            <person name="Watanabe M."/>
            <person name="Hiraoka S."/>
            <person name="Chiba Y."/>
            <person name="Ishida S."/>
            <person name="Ono Y."/>
            <person name="Takiguchi S."/>
            <person name="Watanabe S."/>
            <person name="Yosida M."/>
            <person name="Hotuta T."/>
            <person name="Kusano J."/>
            <person name="Kanehori K."/>
            <person name="Takahashi-Fujii A."/>
            <person name="Hara H."/>
            <person name="Tanase T.-O."/>
            <person name="Nomura Y."/>
            <person name="Togiya S."/>
            <person name="Komai F."/>
            <person name="Hara R."/>
            <person name="Takeuchi K."/>
            <person name="Arita M."/>
            <person name="Imose N."/>
            <person name="Musashino K."/>
            <person name="Yuuki H."/>
            <person name="Oshima A."/>
            <person name="Sasaki N."/>
            <person name="Aotsuka S."/>
            <person name="Yoshikawa Y."/>
            <person name="Matsunawa H."/>
            <person name="Ichihara T."/>
            <person name="Shiohata N."/>
            <person name="Sano S."/>
            <person name="Moriya S."/>
            <person name="Momiyama H."/>
            <person name="Satoh N."/>
            <person name="Takami S."/>
            <person name="Terashima Y."/>
            <person name="Suzuki O."/>
            <person name="Nakagawa S."/>
            <person name="Senoh A."/>
            <person name="Mizoguchi H."/>
            <person name="Goto Y."/>
            <person name="Shimizu F."/>
            <person name="Wakebe H."/>
            <person name="Hishigaki H."/>
            <person name="Watanabe T."/>
            <person name="Sugiyama A."/>
            <person name="Takemoto M."/>
            <person name="Kawakami B."/>
            <person name="Yamazaki M."/>
            <person name="Watanabe K."/>
            <person name="Kumagai A."/>
            <person name="Itakura S."/>
            <person name="Fukuzumi Y."/>
            <person name="Fujimori Y."/>
            <person name="Komiyama M."/>
            <person name="Tashiro H."/>
            <person name="Tanigami A."/>
            <person name="Fujiwara T."/>
            <person name="Ono T."/>
            <person name="Yamada K."/>
            <person name="Fujii Y."/>
            <person name="Ozaki K."/>
            <person name="Hirao M."/>
            <person name="Ohmori Y."/>
            <person name="Kawabata A."/>
            <person name="Hikiji T."/>
            <person name="Kobatake N."/>
            <person name="Inagaki H."/>
            <person name="Ikema Y."/>
            <person name="Okamoto S."/>
            <person name="Okitani R."/>
            <person name="Kawakami T."/>
            <person name="Noguchi S."/>
            <person name="Itoh T."/>
            <person name="Shigeta K."/>
            <person name="Senba T."/>
            <person name="Matsumura K."/>
            <person name="Nakajima Y."/>
            <person name="Mizuno T."/>
            <person name="Morinaga M."/>
            <person name="Sasaki M."/>
            <person name="Togashi T."/>
            <person name="Oyama M."/>
            <person name="Hata H."/>
            <person name="Watanabe M."/>
            <person name="Komatsu T."/>
            <person name="Mizushima-Sugano J."/>
            <person name="Satoh T."/>
            <person name="Shirai Y."/>
            <person name="Takahashi Y."/>
            <person name="Nakagawa K."/>
            <person name="Okumura K."/>
            <person name="Nagase T."/>
            <person name="Nomura N."/>
            <person name="Kikuchi H."/>
            <person name="Masuho Y."/>
            <person name="Yamashita R."/>
            <person name="Nakai K."/>
            <person name="Yada T."/>
            <person name="Nakamura Y."/>
            <person name="Ohara O."/>
            <person name="Isogai T."/>
            <person name="Sugano S."/>
        </authorList>
    </citation>
    <scope>NUCLEOTIDE SEQUENCE [LARGE SCALE MRNA] (ISOFORMS 1 AND 4)</scope>
    <source>
        <tissue>Adipose tissue</tissue>
        <tissue>Umbilical cord blood</tissue>
    </source>
</reference>
<reference key="2">
    <citation type="submission" date="2005-07" db="EMBL/GenBank/DDBJ databases">
        <authorList>
            <person name="Mural R.J."/>
            <person name="Istrail S."/>
            <person name="Sutton G.G."/>
            <person name="Florea L."/>
            <person name="Halpern A.L."/>
            <person name="Mobarry C.M."/>
            <person name="Lippert R."/>
            <person name="Walenz B."/>
            <person name="Shatkay H."/>
            <person name="Dew I."/>
            <person name="Miller J.R."/>
            <person name="Flanigan M.J."/>
            <person name="Edwards N.J."/>
            <person name="Bolanos R."/>
            <person name="Fasulo D."/>
            <person name="Halldorsson B.V."/>
            <person name="Hannenhalli S."/>
            <person name="Turner R."/>
            <person name="Yooseph S."/>
            <person name="Lu F."/>
            <person name="Nusskern D.R."/>
            <person name="Shue B.C."/>
            <person name="Zheng X.H."/>
            <person name="Zhong F."/>
            <person name="Delcher A.L."/>
            <person name="Huson D.H."/>
            <person name="Kravitz S.A."/>
            <person name="Mouchard L."/>
            <person name="Reinert K."/>
            <person name="Remington K.A."/>
            <person name="Clark A.G."/>
            <person name="Waterman M.S."/>
            <person name="Eichler E.E."/>
            <person name="Adams M.D."/>
            <person name="Hunkapiller M.W."/>
            <person name="Myers E.W."/>
            <person name="Venter J.C."/>
        </authorList>
    </citation>
    <scope>NUCLEOTIDE SEQUENCE [LARGE SCALE GENOMIC DNA]</scope>
</reference>
<reference key="3">
    <citation type="journal article" date="2004" name="Genome Res.">
        <title>The status, quality, and expansion of the NIH full-length cDNA project: the Mammalian Gene Collection (MGC).</title>
        <authorList>
            <consortium name="The MGC Project Team"/>
        </authorList>
    </citation>
    <scope>NUCLEOTIDE SEQUENCE [LARGE SCALE MRNA] (ISOFORMS 1 AND 2)</scope>
    <scope>NUCLEOTIDE SEQUENCE [LARGE SCALE MRNA] OF 3-556 (ISOFORM 3)</scope>
    <source>
        <tissue>Brain</tissue>
        <tissue>Ovary</tissue>
        <tissue>Pancreas</tissue>
        <tissue>Uterus</tissue>
    </source>
</reference>
<reference key="4">
    <citation type="journal article" date="2007" name="BMC Genomics">
        <title>The full-ORF clone resource of the German cDNA consortium.</title>
        <authorList>
            <person name="Bechtel S."/>
            <person name="Rosenfelder H."/>
            <person name="Duda A."/>
            <person name="Schmidt C.P."/>
            <person name="Ernst U."/>
            <person name="Wellenreuther R."/>
            <person name="Mehrle A."/>
            <person name="Schuster C."/>
            <person name="Bahr A."/>
            <person name="Bloecker H."/>
            <person name="Heubner D."/>
            <person name="Hoerlein A."/>
            <person name="Michel G."/>
            <person name="Wedler H."/>
            <person name="Koehrer K."/>
            <person name="Ottenwaelder B."/>
            <person name="Poustka A."/>
            <person name="Wiemann S."/>
            <person name="Schupp I."/>
        </authorList>
    </citation>
    <scope>NUCLEOTIDE SEQUENCE [LARGE SCALE MRNA] OF 286-556 (ISOFORM 1)</scope>
    <source>
        <tissue>Melanoma</tissue>
    </source>
</reference>
<evidence type="ECO:0000250" key="1"/>
<evidence type="ECO:0000250" key="2">
    <source>
        <dbReference type="UniProtKB" id="Q8BHF7"/>
    </source>
</evidence>
<evidence type="ECO:0000255" key="3"/>
<evidence type="ECO:0000255" key="4">
    <source>
        <dbReference type="PROSITE-ProRule" id="PRU00153"/>
    </source>
</evidence>
<evidence type="ECO:0000303" key="5">
    <source>
    </source>
</evidence>
<evidence type="ECO:0000303" key="6">
    <source>
    </source>
</evidence>
<evidence type="ECO:0000305" key="7"/>